<evidence type="ECO:0000250" key="1"/>
<evidence type="ECO:0000250" key="2">
    <source>
        <dbReference type="UniProtKB" id="Q03818"/>
    </source>
</evidence>
<evidence type="ECO:0000255" key="3"/>
<evidence type="ECO:0000256" key="4">
    <source>
        <dbReference type="SAM" id="MobiDB-lite"/>
    </source>
</evidence>
<evidence type="ECO:0000305" key="5"/>
<gene>
    <name type="primary">ATG16</name>
    <name type="ORF">MGG_05255</name>
</gene>
<dbReference type="EMBL" id="CM001233">
    <property type="protein sequence ID" value="EHA53005.1"/>
    <property type="molecule type" value="Genomic_DNA"/>
</dbReference>
<dbReference type="RefSeq" id="XP_003712812.1">
    <property type="nucleotide sequence ID" value="XM_003712764.1"/>
</dbReference>
<dbReference type="SMR" id="Q520U5"/>
<dbReference type="STRING" id="242507.Q520U5"/>
<dbReference type="EnsemblFungi" id="MGG_05255T0">
    <property type="protein sequence ID" value="MGG_05255T0"/>
    <property type="gene ID" value="MGG_05255"/>
</dbReference>
<dbReference type="GeneID" id="2675466"/>
<dbReference type="KEGG" id="mgr:MGG_05255"/>
<dbReference type="VEuPathDB" id="FungiDB:MGG_05255"/>
<dbReference type="eggNOG" id="ENOG502S5CU">
    <property type="taxonomic scope" value="Eukaryota"/>
</dbReference>
<dbReference type="HOGENOM" id="CLU_082752_1_0_1"/>
<dbReference type="InParanoid" id="Q520U5"/>
<dbReference type="OMA" id="VQACSQM"/>
<dbReference type="OrthoDB" id="8949486at2759"/>
<dbReference type="PHI-base" id="PHI:2082"/>
<dbReference type="Proteomes" id="UP000009058">
    <property type="component" value="Chromosome 3"/>
</dbReference>
<dbReference type="GO" id="GO:0034045">
    <property type="term" value="C:phagophore assembly site membrane"/>
    <property type="evidence" value="ECO:0007669"/>
    <property type="project" value="UniProtKB-SubCell"/>
</dbReference>
<dbReference type="GO" id="GO:0006914">
    <property type="term" value="P:autophagy"/>
    <property type="evidence" value="ECO:0007669"/>
    <property type="project" value="UniProtKB-KW"/>
</dbReference>
<dbReference type="GO" id="GO:0015031">
    <property type="term" value="P:protein transport"/>
    <property type="evidence" value="ECO:0007669"/>
    <property type="project" value="UniProtKB-KW"/>
</dbReference>
<dbReference type="CDD" id="cd22887">
    <property type="entry name" value="Atg16_CCD"/>
    <property type="match status" value="1"/>
</dbReference>
<dbReference type="Gene3D" id="1.20.5.170">
    <property type="match status" value="1"/>
</dbReference>
<dbReference type="InterPro" id="IPR013923">
    <property type="entry name" value="Autophagy-rel_prot_16_dom"/>
</dbReference>
<dbReference type="Pfam" id="PF08614">
    <property type="entry name" value="ATG16"/>
    <property type="match status" value="1"/>
</dbReference>
<protein>
    <recommendedName>
        <fullName>Autophagy protein 16</fullName>
    </recommendedName>
</protein>
<reference key="1">
    <citation type="journal article" date="2005" name="Nature">
        <title>The genome sequence of the rice blast fungus Magnaporthe grisea.</title>
        <authorList>
            <person name="Dean R.A."/>
            <person name="Talbot N.J."/>
            <person name="Ebbole D.J."/>
            <person name="Farman M.L."/>
            <person name="Mitchell T.K."/>
            <person name="Orbach M.J."/>
            <person name="Thon M.R."/>
            <person name="Kulkarni R."/>
            <person name="Xu J.-R."/>
            <person name="Pan H."/>
            <person name="Read N.D."/>
            <person name="Lee Y.-H."/>
            <person name="Carbone I."/>
            <person name="Brown D."/>
            <person name="Oh Y.Y."/>
            <person name="Donofrio N."/>
            <person name="Jeong J.S."/>
            <person name="Soanes D.M."/>
            <person name="Djonovic S."/>
            <person name="Kolomiets E."/>
            <person name="Rehmeyer C."/>
            <person name="Li W."/>
            <person name="Harding M."/>
            <person name="Kim S."/>
            <person name="Lebrun M.-H."/>
            <person name="Bohnert H."/>
            <person name="Coughlan S."/>
            <person name="Butler J."/>
            <person name="Calvo S.E."/>
            <person name="Ma L.-J."/>
            <person name="Nicol R."/>
            <person name="Purcell S."/>
            <person name="Nusbaum C."/>
            <person name="Galagan J.E."/>
            <person name="Birren B.W."/>
        </authorList>
    </citation>
    <scope>NUCLEOTIDE SEQUENCE [LARGE SCALE GENOMIC DNA]</scope>
    <source>
        <strain>70-15 / ATCC MYA-4617 / FGSC 8958</strain>
    </source>
</reference>
<accession>Q520U5</accession>
<accession>A4QSV8</accession>
<accession>G4N5E8</accession>
<proteinExistence type="inferred from homology"/>
<sequence length="204" mass="22465">MSSLPDWRDEYLASIKEAEKNSPVNRDLVEACSQLQDRVAALEAERDALKASGASAGQSASDPASQSGDAAQSAVVARLRLDLAEALGTQERLQSRLGLAESELERLRAKTAEDAKTIRTLNTQCVSLSTKVKDRNEELQGKSKLVENVQDELIALTLQLNVMEQQKAKIQAENDQLVERWMKRMGQEAEAMNLANEPKFAKRG</sequence>
<feature type="chain" id="PRO_0000218593" description="Autophagy protein 16">
    <location>
        <begin position="1"/>
        <end position="204"/>
    </location>
</feature>
<feature type="region of interest" description="Disordered" evidence="4">
    <location>
        <begin position="50"/>
        <end position="69"/>
    </location>
</feature>
<feature type="coiled-coil region" evidence="3">
    <location>
        <begin position="24"/>
        <end position="183"/>
    </location>
</feature>
<feature type="compositionally biased region" description="Low complexity" evidence="4">
    <location>
        <begin position="51"/>
        <end position="69"/>
    </location>
</feature>
<keyword id="KW-0072">Autophagy</keyword>
<keyword id="KW-0175">Coiled coil</keyword>
<keyword id="KW-0472">Membrane</keyword>
<keyword id="KW-0653">Protein transport</keyword>
<keyword id="KW-1185">Reference proteome</keyword>
<keyword id="KW-0813">Transport</keyword>
<comment type="function">
    <text evidence="1">Stabilizes the ATG5-ATG12 conjugate which is necessary for autophagy. The ATG5-ATG12/ATG16 complex is required for efficient promotion of ATG8-conjugation to phosphatidylethanolamine and ATG8 localization to the pre-autophagosomal structure (PAS). Also recruits ATG3 to the PAS. Involved in endoplasmic reticulum-specific autophagic process and is essential for the survival of cells subjected to severe ER stress (By similarity).</text>
</comment>
<comment type="subunit">
    <text evidence="1">Homodimer (By similarity). Part of the ATG5-ATG12/ATG16 complex. Several units of each may be present in this complex (By similarity).</text>
</comment>
<comment type="subcellular location">
    <subcellularLocation>
        <location evidence="2">Preautophagosomal structure membrane</location>
        <topology evidence="2">Peripheral membrane protein</topology>
    </subcellularLocation>
</comment>
<comment type="similarity">
    <text evidence="5">Belongs to the ATG16 family.</text>
</comment>
<name>ATG16_PYRO7</name>
<organism>
    <name type="scientific">Pyricularia oryzae (strain 70-15 / ATCC MYA-4617 / FGSC 8958)</name>
    <name type="common">Rice blast fungus</name>
    <name type="synonym">Magnaporthe oryzae</name>
    <dbReference type="NCBI Taxonomy" id="242507"/>
    <lineage>
        <taxon>Eukaryota</taxon>
        <taxon>Fungi</taxon>
        <taxon>Dikarya</taxon>
        <taxon>Ascomycota</taxon>
        <taxon>Pezizomycotina</taxon>
        <taxon>Sordariomycetes</taxon>
        <taxon>Sordariomycetidae</taxon>
        <taxon>Magnaporthales</taxon>
        <taxon>Pyriculariaceae</taxon>
        <taxon>Pyricularia</taxon>
    </lineage>
</organism>